<feature type="chain" id="PRO_0000206739" description="Vesicle-associated membrane protein 8">
    <location>
        <begin position="1"/>
        <end position="100"/>
    </location>
</feature>
<feature type="topological domain" description="Cytoplasmic" evidence="3">
    <location>
        <begin position="1"/>
        <end position="74"/>
    </location>
</feature>
<feature type="transmembrane region" description="Helical; Anchor for type IV membrane protein" evidence="3">
    <location>
        <begin position="75"/>
        <end position="95"/>
    </location>
</feature>
<feature type="topological domain" description="Vesicular" evidence="3">
    <location>
        <begin position="96"/>
        <end position="100"/>
    </location>
</feature>
<feature type="domain" description="v-SNARE coiled-coil homology" evidence="4">
    <location>
        <begin position="11"/>
        <end position="71"/>
    </location>
</feature>
<feature type="site" description="Binding to STX8" evidence="9">
    <location>
        <position position="32"/>
    </location>
</feature>
<feature type="modified residue" description="Phosphoserine" evidence="2">
    <location>
        <position position="4"/>
    </location>
</feature>
<feature type="modified residue" description="Phosphoserine" evidence="2">
    <location>
        <position position="17"/>
    </location>
</feature>
<feature type="modified residue" description="Phosphothreonine" evidence="2">
    <location>
        <position position="27"/>
    </location>
</feature>
<feature type="modified residue" description="Phosphothreonine" evidence="2">
    <location>
        <position position="47"/>
    </location>
</feature>
<feature type="modified residue" description="Phosphothreonine" evidence="2">
    <location>
        <position position="53"/>
    </location>
</feature>
<feature type="modified residue" description="Phosphoserine" evidence="2">
    <location>
        <position position="54"/>
    </location>
</feature>
<feature type="helix" evidence="15">
    <location>
        <begin position="12"/>
        <end position="62"/>
    </location>
</feature>
<comment type="function">
    <text evidence="2 6 7 11">SNAREs, soluble N-ethylmaleimide-sensitive factor-attachment protein receptors, are essential proteins for fusion of cellular membranes. SNAREs localized on opposing membranes assemble to form a trans-SNARE complex, an extended, parallel four alpha-helical bundle that drives membrane fusion. VAMP8 is a SNARE involved in autophagy through the direct control of autophagosome membrane fusion with the lysososome membrane via its interaction with the STX17-SNAP29 binary t-SNARE complex (By similarity). Also required for dense-granule secretion in platelets (By similarity). Also plays a role in regulated enzyme secretion in pancreatic acinar cells (By similarity). Involved in the abscission of the midbody during cell division, which leads to completely separate daughter cells (PubMed:12737809). Involved in the homotypic fusion of early and late endosomes (PubMed:10982406, PubMed:11029036). Also participates in the activation of type I interferon antiviral response through a TRIM6-dependent mechanism (By similarity).</text>
</comment>
<comment type="subunit">
    <text evidence="1 2 5 9 12">Forms a SNARE complex composed of VAMP8, SNAP29 and STX17 involved in fusion of autophagosome with lysosome (By similarity). Found in a number of SNARE complexes with NAPA, SNAP23, SNAP25, STX1A, STX4, STX7, STX8 and VTI1B (PubMed:10336434, PubMed:11786915, PubMed:9614193). Interacts with PICALM (By similarity). SNARE complex formation and binding by PICALM are mutually exclusive processes for VAMP8 (By similarity). Interacts with SBF2/MTMR13 (By similarity). Interacts with RAB21 (in GTP-bound form) in response to starvation; the interaction probably regulates VAMP8 endolysosomal trafficking (By similarity). Interacts with STX17; this interaction is increased in the absence of TMEM39A (By similarity). Interacts with TRIM6 (By similarity).</text>
</comment>
<comment type="subcellular location">
    <subcellularLocation>
        <location evidence="6">Lysosome membrane</location>
        <topology evidence="14">Single-pass type IV membrane protein</topology>
    </subcellularLocation>
    <subcellularLocation>
        <location evidence="6 7">Late endosome membrane</location>
        <topology evidence="14">Single-pass type IV membrane protein</topology>
    </subcellularLocation>
    <subcellularLocation>
        <location evidence="7 12">Early endosome membrane</location>
        <topology evidence="14">Single-pass type IV membrane protein</topology>
    </subcellularLocation>
    <subcellularLocation>
        <location evidence="11">Midbody</location>
    </subcellularLocation>
    <subcellularLocation>
        <location evidence="1">Cell membrane</location>
        <topology evidence="14">Single-pass type IV membrane protein</topology>
    </subcellularLocation>
    <subcellularLocation>
        <location evidence="1">Zymogen granule membrane</location>
        <topology evidence="14">Single-pass type IV membrane protein</topology>
    </subcellularLocation>
    <text evidence="1 7 8 10 11 12">Perinuclear vesicular structures of the early and late endosomes, coated pits, and trans-Golgi (PubMed:9614193). Sub-tight junctional domain in retinal pigment epithelium cells (PubMed:11029036). Midbody region during cytokinesis (PubMed:12414999). Lumenal oriented, apical membranes of nephric tubular cell (PubMed:11208143). Cycles through the apical but not through the basolateral plasma membrane (By similarity). Apical region of acinar cells; in zymogen granule membranes (By similarity).</text>
</comment>
<comment type="tissue specificity">
    <text evidence="8 10">Expressed (at protein level) at a high level in kidney, lung and spleen; at a lower level in testis, liver, brain and heart. Expressed in kidney and retinal pigment epithelium derived cell line.</text>
</comment>
<comment type="similarity">
    <text evidence="14">Belongs to the synaptobrevin family.</text>
</comment>
<name>VAMP8_RAT</name>
<accession>Q9WUF4</accession>
<sequence>MEASGSAGNDRVRNLQSEVEGVKNIMTQNVERILARGENLDHLRNKTEDLEATSEHFKTTSQKVARKFWWKNVKMIVIICVIVLIILILIILFATGTIPT</sequence>
<organism>
    <name type="scientific">Rattus norvegicus</name>
    <name type="common">Rat</name>
    <dbReference type="NCBI Taxonomy" id="10116"/>
    <lineage>
        <taxon>Eukaryota</taxon>
        <taxon>Metazoa</taxon>
        <taxon>Chordata</taxon>
        <taxon>Craniata</taxon>
        <taxon>Vertebrata</taxon>
        <taxon>Euteleostomi</taxon>
        <taxon>Mammalia</taxon>
        <taxon>Eutheria</taxon>
        <taxon>Euarchontoglires</taxon>
        <taxon>Glires</taxon>
        <taxon>Rodentia</taxon>
        <taxon>Myomorpha</taxon>
        <taxon>Muroidea</taxon>
        <taxon>Muridae</taxon>
        <taxon>Murinae</taxon>
        <taxon>Rattus</taxon>
    </lineage>
</organism>
<reference key="1">
    <citation type="journal article" date="1999" name="J. Biol. Chem.">
        <title>Mixed and non-cognate SNARE complexes. Characterization of assembly and biophysical properties.</title>
        <authorList>
            <person name="Fasshauer D."/>
            <person name="Antonin W."/>
            <person name="Margittai M."/>
            <person name="Pabst S."/>
            <person name="Jahn R."/>
        </authorList>
    </citation>
    <scope>NUCLEOTIDE SEQUENCE [MRNA]</scope>
    <scope>IDENTIFICATION IN A TERNARY COMPLEX WITH STX1A AND SNAP25</scope>
</reference>
<reference key="2">
    <citation type="journal article" date="1998" name="Mol. Biol. Cell">
        <title>Endobrevin, a novel synaptobrevin/VAMP-like protein preferentially associated with the early endosome.</title>
        <authorList>
            <person name="Wong S.H."/>
            <person name="Zhang T."/>
            <person name="Xu Y."/>
            <person name="Subramaniam V.N."/>
            <person name="Griffiths G."/>
            <person name="Hong W."/>
        </authorList>
    </citation>
    <scope>SUBCELLULAR LOCATION</scope>
    <scope>IDENTIFICATION IN A COMPLEX WITH NAPA</scope>
</reference>
<reference key="3">
    <citation type="journal article" date="2000" name="Traffic">
        <title>SNARE protein trafficking in polarized MDCK cells.</title>
        <authorList>
            <person name="Steegmaier M."/>
            <person name="Lee K.C."/>
            <person name="Prekeris R."/>
            <person name="Scheller R.H."/>
        </authorList>
    </citation>
    <scope>TISSUE SPECIFICITY</scope>
    <scope>SUBCELLULAR LOCATION</scope>
</reference>
<reference key="4">
    <citation type="journal article" date="2000" name="Mol. Biol. Cell">
        <title>Syntaxin 7 is localized to late endosome compartments, associates with Vamp 8, and Is required for late endosome-lysosome fusion.</title>
        <authorList>
            <person name="Mullock B.M."/>
            <person name="Smith C.W."/>
            <person name="Ihrke G."/>
            <person name="Bright N.A."/>
            <person name="Lindsay M."/>
            <person name="Parkinson E.J."/>
            <person name="Brooks D.A."/>
            <person name="Parton R.G."/>
            <person name="James D.E."/>
            <person name="Luzio J.P."/>
            <person name="Piper R.C."/>
        </authorList>
    </citation>
    <scope>INTERACTION WITH STX7</scope>
    <scope>SUBCELLULAR LOCATION</scope>
    <scope>FUNCTION</scope>
</reference>
<reference key="5">
    <citation type="journal article" date="2000" name="Mol. Biol. Cell">
        <title>The R-SNARE endobrevin/VAMP-8 mediates homotypic fusion of early endosomes and late endosomes.</title>
        <authorList>
            <person name="Antonin W."/>
            <person name="Holroyd C."/>
            <person name="Tikkanen R."/>
            <person name="Honing S."/>
            <person name="Jahn R."/>
        </authorList>
    </citation>
    <scope>FUNCTION</scope>
    <scope>SUBCELLULAR LOCATION</scope>
</reference>
<reference key="6">
    <citation type="journal article" date="2002" name="J. Cell Sci.">
        <title>Retinal pigment epithelial cells exhibit unique expression and localization of plasma membrane syntaxins which may contribute to their trafficking phenotype.</title>
        <authorList>
            <person name="Low S.H."/>
            <person name="Marmorstein L.Y."/>
            <person name="Miura M."/>
            <person name="Li X."/>
            <person name="Kudo N."/>
            <person name="Marmorstein A.D."/>
            <person name="Weimbs T."/>
        </authorList>
    </citation>
    <scope>TISSUE SPECIFICITY</scope>
    <scope>SUBCELLULAR LOCATION</scope>
</reference>
<reference key="7">
    <citation type="journal article" date="2003" name="Dev. Cell">
        <title>Syntaxin 2 and endobrevin are required for the terminal step of cytokinesis in mammalian cells.</title>
        <authorList>
            <person name="Low S.H."/>
            <person name="Li X."/>
            <person name="Miura M."/>
            <person name="Kudo N."/>
            <person name="Quinones B."/>
            <person name="Weimbs T."/>
        </authorList>
    </citation>
    <scope>FUNCTION</scope>
    <scope>SUBCELLULAR LOCATION</scope>
</reference>
<reference key="8">
    <citation type="journal article" date="2002" name="Nat. Struct. Biol.">
        <title>Crystal structure of the endosomal SNARE complex reveals common structural principles of all SNAREs.</title>
        <authorList>
            <person name="Antonin W."/>
            <person name="Fasshauer D."/>
            <person name="Becker S."/>
            <person name="Jahn R."/>
            <person name="Schneider T.R."/>
        </authorList>
    </citation>
    <scope>X-RAY CRYSTALLOGRAPHY (1.9 ANGSTROMS) OF 6-66 IN COMPLEX WITH STX7; STX8 AND VTI1B</scope>
    <scope>INTERACTION WITH STX8</scope>
</reference>
<protein>
    <recommendedName>
        <fullName evidence="13">Vesicle-associated membrane protein 8</fullName>
        <shortName evidence="13">VAMP-8</shortName>
    </recommendedName>
    <alternativeName>
        <fullName evidence="2">Endobrevin</fullName>
        <shortName evidence="2">EDB</shortName>
    </alternativeName>
</protein>
<gene>
    <name evidence="13" type="primary">Vamp8</name>
</gene>
<keyword id="KW-0002">3D-structure</keyword>
<keyword id="KW-0051">Antiviral defense</keyword>
<keyword id="KW-0072">Autophagy</keyword>
<keyword id="KW-1003">Cell membrane</keyword>
<keyword id="KW-0175">Coiled coil</keyword>
<keyword id="KW-0968">Cytoplasmic vesicle</keyword>
<keyword id="KW-0967">Endosome</keyword>
<keyword id="KW-0458">Lysosome</keyword>
<keyword id="KW-0472">Membrane</keyword>
<keyword id="KW-0597">Phosphoprotein</keyword>
<keyword id="KW-0653">Protein transport</keyword>
<keyword id="KW-1185">Reference proteome</keyword>
<keyword id="KW-0812">Transmembrane</keyword>
<keyword id="KW-1133">Transmembrane helix</keyword>
<keyword id="KW-0813">Transport</keyword>
<dbReference type="EMBL" id="AF132812">
    <property type="protein sequence ID" value="AAD33595.1"/>
    <property type="molecule type" value="mRNA"/>
</dbReference>
<dbReference type="RefSeq" id="NP_114015.1">
    <property type="nucleotide sequence ID" value="NM_031827.2"/>
</dbReference>
<dbReference type="PDB" id="1GL2">
    <property type="method" value="X-ray"/>
    <property type="resolution" value="1.90 A"/>
    <property type="chains" value="A=6-66"/>
</dbReference>
<dbReference type="PDBsum" id="1GL2"/>
<dbReference type="SMR" id="Q9WUF4"/>
<dbReference type="CORUM" id="Q9WUF4"/>
<dbReference type="DIP" id="DIP-43964N"/>
<dbReference type="FunCoup" id="Q9WUF4">
    <property type="interactions" value="376"/>
</dbReference>
<dbReference type="IntAct" id="Q9WUF4">
    <property type="interactions" value="8"/>
</dbReference>
<dbReference type="MINT" id="Q9WUF4"/>
<dbReference type="STRING" id="10116.ENSRNOP00000017301"/>
<dbReference type="iPTMnet" id="Q9WUF4"/>
<dbReference type="PhosphoSitePlus" id="Q9WUF4"/>
<dbReference type="PaxDb" id="10116-ENSRNOP00000017301"/>
<dbReference type="Ensembl" id="ENSRNOT00000096938.1">
    <property type="protein sequence ID" value="ENSRNOP00000083978.1"/>
    <property type="gene ID" value="ENSRNOG00000012748.5"/>
</dbReference>
<dbReference type="GeneID" id="83730"/>
<dbReference type="KEGG" id="rno:83730"/>
<dbReference type="UCSC" id="RGD:620421">
    <property type="organism name" value="rat"/>
</dbReference>
<dbReference type="AGR" id="RGD:620421"/>
<dbReference type="CTD" id="8673"/>
<dbReference type="RGD" id="620421">
    <property type="gene designation" value="Vamp8"/>
</dbReference>
<dbReference type="eggNOG" id="KOG0860">
    <property type="taxonomic scope" value="Eukaryota"/>
</dbReference>
<dbReference type="GeneTree" id="ENSGT00940000160325"/>
<dbReference type="InParanoid" id="Q9WUF4"/>
<dbReference type="PhylomeDB" id="Q9WUF4"/>
<dbReference type="Reactome" id="R-RNO-1236974">
    <property type="pathway name" value="ER-Phagosome pathway"/>
</dbReference>
<dbReference type="Reactome" id="R-RNO-199992">
    <property type="pathway name" value="trans-Golgi Network Vesicle Budding"/>
</dbReference>
<dbReference type="Reactome" id="R-RNO-432720">
    <property type="pathway name" value="Lysosome Vesicle Biogenesis"/>
</dbReference>
<dbReference type="Reactome" id="R-RNO-432722">
    <property type="pathway name" value="Golgi Associated Vesicle Biogenesis"/>
</dbReference>
<dbReference type="Reactome" id="R-RNO-6798695">
    <property type="pathway name" value="Neutrophil degranulation"/>
</dbReference>
<dbReference type="Reactome" id="R-RNO-8856825">
    <property type="pathway name" value="Cargo recognition for clathrin-mediated endocytosis"/>
</dbReference>
<dbReference type="Reactome" id="R-RNO-8856828">
    <property type="pathway name" value="Clathrin-mediated endocytosis"/>
</dbReference>
<dbReference type="EvolutionaryTrace" id="Q9WUF4"/>
<dbReference type="PRO" id="PR:Q9WUF4"/>
<dbReference type="Proteomes" id="UP000002494">
    <property type="component" value="Chromosome 4"/>
</dbReference>
<dbReference type="GO" id="GO:0035577">
    <property type="term" value="C:azurophil granule membrane"/>
    <property type="evidence" value="ECO:0000266"/>
    <property type="project" value="RGD"/>
</dbReference>
<dbReference type="GO" id="GO:0045178">
    <property type="term" value="C:basal part of cell"/>
    <property type="evidence" value="ECO:0000266"/>
    <property type="project" value="RGD"/>
</dbReference>
<dbReference type="GO" id="GO:1990794">
    <property type="term" value="C:basolateral part of cell"/>
    <property type="evidence" value="ECO:0000266"/>
    <property type="project" value="RGD"/>
</dbReference>
<dbReference type="GO" id="GO:0016323">
    <property type="term" value="C:basolateral plasma membrane"/>
    <property type="evidence" value="ECO:0000266"/>
    <property type="project" value="RGD"/>
</dbReference>
<dbReference type="GO" id="GO:0009986">
    <property type="term" value="C:cell surface"/>
    <property type="evidence" value="ECO:0000266"/>
    <property type="project" value="RGD"/>
</dbReference>
<dbReference type="GO" id="GO:0005737">
    <property type="term" value="C:cytoplasm"/>
    <property type="evidence" value="ECO:0000266"/>
    <property type="project" value="RGD"/>
</dbReference>
<dbReference type="GO" id="GO:0005829">
    <property type="term" value="C:cytosol"/>
    <property type="evidence" value="ECO:0000266"/>
    <property type="project" value="RGD"/>
</dbReference>
<dbReference type="GO" id="GO:0031901">
    <property type="term" value="C:early endosome membrane"/>
    <property type="evidence" value="ECO:0007669"/>
    <property type="project" value="UniProtKB-SubCell"/>
</dbReference>
<dbReference type="GO" id="GO:0031902">
    <property type="term" value="C:late endosome membrane"/>
    <property type="evidence" value="ECO:0000314"/>
    <property type="project" value="RGD"/>
</dbReference>
<dbReference type="GO" id="GO:0005765">
    <property type="term" value="C:lysosomal membrane"/>
    <property type="evidence" value="ECO:0000314"/>
    <property type="project" value="RGD"/>
</dbReference>
<dbReference type="GO" id="GO:0005764">
    <property type="term" value="C:lysosome"/>
    <property type="evidence" value="ECO:0000266"/>
    <property type="project" value="RGD"/>
</dbReference>
<dbReference type="GO" id="GO:0016020">
    <property type="term" value="C:membrane"/>
    <property type="evidence" value="ECO:0000266"/>
    <property type="project" value="RGD"/>
</dbReference>
<dbReference type="GO" id="GO:0030496">
    <property type="term" value="C:midbody"/>
    <property type="evidence" value="ECO:0000314"/>
    <property type="project" value="CACAO"/>
</dbReference>
<dbReference type="GO" id="GO:0098594">
    <property type="term" value="C:mucin granule"/>
    <property type="evidence" value="ECO:0000266"/>
    <property type="project" value="RGD"/>
</dbReference>
<dbReference type="GO" id="GO:0048471">
    <property type="term" value="C:perinuclear region of cytoplasm"/>
    <property type="evidence" value="ECO:0000266"/>
    <property type="project" value="RGD"/>
</dbReference>
<dbReference type="GO" id="GO:0045335">
    <property type="term" value="C:phagocytic vesicle"/>
    <property type="evidence" value="ECO:0000266"/>
    <property type="project" value="RGD"/>
</dbReference>
<dbReference type="GO" id="GO:0005886">
    <property type="term" value="C:plasma membrane"/>
    <property type="evidence" value="ECO:0000266"/>
    <property type="project" value="RGD"/>
</dbReference>
<dbReference type="GO" id="GO:0055037">
    <property type="term" value="C:recycling endosome"/>
    <property type="evidence" value="ECO:0000314"/>
    <property type="project" value="RGD"/>
</dbReference>
<dbReference type="GO" id="GO:0030141">
    <property type="term" value="C:secretory granule"/>
    <property type="evidence" value="ECO:0000266"/>
    <property type="project" value="RGD"/>
</dbReference>
<dbReference type="GO" id="GO:0030667">
    <property type="term" value="C:secretory granule membrane"/>
    <property type="evidence" value="ECO:0000266"/>
    <property type="project" value="RGD"/>
</dbReference>
<dbReference type="GO" id="GO:0031201">
    <property type="term" value="C:SNARE complex"/>
    <property type="evidence" value="ECO:0000314"/>
    <property type="project" value="RGD"/>
</dbReference>
<dbReference type="GO" id="GO:0031982">
    <property type="term" value="C:vesicle"/>
    <property type="evidence" value="ECO:0000266"/>
    <property type="project" value="RGD"/>
</dbReference>
<dbReference type="GO" id="GO:0042588">
    <property type="term" value="C:zymogen granule"/>
    <property type="evidence" value="ECO:0000266"/>
    <property type="project" value="RGD"/>
</dbReference>
<dbReference type="GO" id="GO:0042589">
    <property type="term" value="C:zymogen granule membrane"/>
    <property type="evidence" value="ECO:0007669"/>
    <property type="project" value="UniProtKB-SubCell"/>
</dbReference>
<dbReference type="GO" id="GO:0019869">
    <property type="term" value="F:chloride channel inhibitor activity"/>
    <property type="evidence" value="ECO:0000266"/>
    <property type="project" value="RGD"/>
</dbReference>
<dbReference type="GO" id="GO:0005484">
    <property type="term" value="F:SNAP receptor activity"/>
    <property type="evidence" value="ECO:0000314"/>
    <property type="project" value="FlyBase"/>
</dbReference>
<dbReference type="GO" id="GO:0019905">
    <property type="term" value="F:syntaxin binding"/>
    <property type="evidence" value="ECO:0000353"/>
    <property type="project" value="RGD"/>
</dbReference>
<dbReference type="GO" id="GO:0097352">
    <property type="term" value="P:autophagosome maturation"/>
    <property type="evidence" value="ECO:0000250"/>
    <property type="project" value="UniProtKB"/>
</dbReference>
<dbReference type="GO" id="GO:0016240">
    <property type="term" value="P:autophagosome membrane docking"/>
    <property type="evidence" value="ECO:0000266"/>
    <property type="project" value="RGD"/>
</dbReference>
<dbReference type="GO" id="GO:0071346">
    <property type="term" value="P:cellular response to type II interferon"/>
    <property type="evidence" value="ECO:0000266"/>
    <property type="project" value="RGD"/>
</dbReference>
<dbReference type="GO" id="GO:0051607">
    <property type="term" value="P:defense response to virus"/>
    <property type="evidence" value="ECO:0007669"/>
    <property type="project" value="UniProtKB-KW"/>
</dbReference>
<dbReference type="GO" id="GO:0051649">
    <property type="term" value="P:establishment of localization in cell"/>
    <property type="evidence" value="ECO:0000266"/>
    <property type="project" value="RGD"/>
</dbReference>
<dbReference type="GO" id="GO:0061025">
    <property type="term" value="P:membrane fusion"/>
    <property type="evidence" value="ECO:0000314"/>
    <property type="project" value="RGD"/>
</dbReference>
<dbReference type="GO" id="GO:0070254">
    <property type="term" value="P:mucus secretion"/>
    <property type="evidence" value="ECO:0000266"/>
    <property type="project" value="RGD"/>
</dbReference>
<dbReference type="GO" id="GO:1903531">
    <property type="term" value="P:negative regulation of secretion by cell"/>
    <property type="evidence" value="ECO:0000266"/>
    <property type="project" value="RGD"/>
</dbReference>
<dbReference type="GO" id="GO:1903595">
    <property type="term" value="P:positive regulation of histamine secretion by mast cell"/>
    <property type="evidence" value="ECO:0000266"/>
    <property type="project" value="RGD"/>
</dbReference>
<dbReference type="GO" id="GO:1902278">
    <property type="term" value="P:positive regulation of pancreatic amylase secretion"/>
    <property type="evidence" value="ECO:0000266"/>
    <property type="project" value="RGD"/>
</dbReference>
<dbReference type="GO" id="GO:0015031">
    <property type="term" value="P:protein transport"/>
    <property type="evidence" value="ECO:0007669"/>
    <property type="project" value="UniProtKB-KW"/>
</dbReference>
<dbReference type="GO" id="GO:0065003">
    <property type="term" value="P:protein-containing complex assembly"/>
    <property type="evidence" value="ECO:0000314"/>
    <property type="project" value="RGD"/>
</dbReference>
<dbReference type="GO" id="GO:0030100">
    <property type="term" value="P:regulation of endocytosis"/>
    <property type="evidence" value="ECO:0000266"/>
    <property type="project" value="RGD"/>
</dbReference>
<dbReference type="GO" id="GO:1903076">
    <property type="term" value="P:regulation of protein localization to plasma membrane"/>
    <property type="evidence" value="ECO:0000266"/>
    <property type="project" value="RGD"/>
</dbReference>
<dbReference type="GO" id="GO:0035493">
    <property type="term" value="P:SNARE complex assembly"/>
    <property type="evidence" value="ECO:0000266"/>
    <property type="project" value="RGD"/>
</dbReference>
<dbReference type="GO" id="GO:0046718">
    <property type="term" value="P:symbiont entry into host cell"/>
    <property type="evidence" value="ECO:0000266"/>
    <property type="project" value="RGD"/>
</dbReference>
<dbReference type="GO" id="GO:0006906">
    <property type="term" value="P:vesicle fusion"/>
    <property type="evidence" value="ECO:0000314"/>
    <property type="project" value="RGD"/>
</dbReference>
<dbReference type="GO" id="GO:0016192">
    <property type="term" value="P:vesicle-mediated transport"/>
    <property type="evidence" value="ECO:0000314"/>
    <property type="project" value="RGD"/>
</dbReference>
<dbReference type="GO" id="GO:0070625">
    <property type="term" value="P:zymogen granule exocytosis"/>
    <property type="evidence" value="ECO:0000266"/>
    <property type="project" value="RGD"/>
</dbReference>
<dbReference type="CDD" id="cd15868">
    <property type="entry name" value="R-SNARE_VAMP8"/>
    <property type="match status" value="1"/>
</dbReference>
<dbReference type="FunFam" id="1.20.5.110:FF:000055">
    <property type="entry name" value="vesicle-associated membrane protein 8"/>
    <property type="match status" value="1"/>
</dbReference>
<dbReference type="Gene3D" id="1.20.5.110">
    <property type="match status" value="1"/>
</dbReference>
<dbReference type="InterPro" id="IPR001388">
    <property type="entry name" value="Synaptobrevin-like"/>
</dbReference>
<dbReference type="InterPro" id="IPR016444">
    <property type="entry name" value="Synaptobrevin/VAMP"/>
</dbReference>
<dbReference type="InterPro" id="IPR042855">
    <property type="entry name" value="V_SNARE_CC"/>
</dbReference>
<dbReference type="PANTHER" id="PTHR45701">
    <property type="entry name" value="SYNAPTOBREVIN FAMILY MEMBER"/>
    <property type="match status" value="1"/>
</dbReference>
<dbReference type="Pfam" id="PF00957">
    <property type="entry name" value="Synaptobrevin"/>
    <property type="match status" value="1"/>
</dbReference>
<dbReference type="PIRSF" id="PIRSF005409">
    <property type="entry name" value="Synaptobrevin_euk"/>
    <property type="match status" value="1"/>
</dbReference>
<dbReference type="PRINTS" id="PR00219">
    <property type="entry name" value="SYNAPTOBREVN"/>
</dbReference>
<dbReference type="SUPFAM" id="SSF58038">
    <property type="entry name" value="SNARE fusion complex"/>
    <property type="match status" value="1"/>
</dbReference>
<dbReference type="PROSITE" id="PS00417">
    <property type="entry name" value="SYNAPTOBREVIN"/>
    <property type="match status" value="1"/>
</dbReference>
<dbReference type="PROSITE" id="PS50892">
    <property type="entry name" value="V_SNARE"/>
    <property type="match status" value="1"/>
</dbReference>
<evidence type="ECO:0000250" key="1">
    <source>
        <dbReference type="UniProtKB" id="O70404"/>
    </source>
</evidence>
<evidence type="ECO:0000250" key="2">
    <source>
        <dbReference type="UniProtKB" id="Q9BV40"/>
    </source>
</evidence>
<evidence type="ECO:0000255" key="3"/>
<evidence type="ECO:0000255" key="4">
    <source>
        <dbReference type="PROSITE-ProRule" id="PRU00290"/>
    </source>
</evidence>
<evidence type="ECO:0000269" key="5">
    <source>
    </source>
</evidence>
<evidence type="ECO:0000269" key="6">
    <source>
    </source>
</evidence>
<evidence type="ECO:0000269" key="7">
    <source>
    </source>
</evidence>
<evidence type="ECO:0000269" key="8">
    <source>
    </source>
</evidence>
<evidence type="ECO:0000269" key="9">
    <source>
    </source>
</evidence>
<evidence type="ECO:0000269" key="10">
    <source>
    </source>
</evidence>
<evidence type="ECO:0000269" key="11">
    <source>
    </source>
</evidence>
<evidence type="ECO:0000269" key="12">
    <source>
    </source>
</evidence>
<evidence type="ECO:0000303" key="13">
    <source>
    </source>
</evidence>
<evidence type="ECO:0000305" key="14"/>
<evidence type="ECO:0007829" key="15">
    <source>
        <dbReference type="PDB" id="1GL2"/>
    </source>
</evidence>
<proteinExistence type="evidence at protein level"/>